<evidence type="ECO:0000250" key="1">
    <source>
        <dbReference type="UniProtKB" id="A0A0H2ZQL5"/>
    </source>
</evidence>
<evidence type="ECO:0000250" key="2">
    <source>
        <dbReference type="UniProtKB" id="C0SPC1"/>
    </source>
</evidence>
<evidence type="ECO:0000269" key="3">
    <source>
    </source>
</evidence>
<evidence type="ECO:0000303" key="4">
    <source>
    </source>
</evidence>
<evidence type="ECO:0000305" key="5"/>
<evidence type="ECO:0000312" key="6">
    <source>
        <dbReference type="EMBL" id="AAK99279.1"/>
    </source>
</evidence>
<evidence type="ECO:0000312" key="7">
    <source>
        <dbReference type="Proteomes" id="UP000000586"/>
    </source>
</evidence>
<comment type="function">
    <text evidence="1 2">Plays a role in cell cycle regulation and chromosome integrity. Activates DnaA-dependent chromosomal DNA replication initiation ensuring that the chromosome is replicated at the right time during the cell cycle (By similarity). May regulate replication initiation through phosphorylation of a possible second messenger or metabolite, and by interacting with replication initiation proteins. Has ATPase activity with D-ribose and 2-deoxy-D-ribose in vitro, but not with choline. Involved in DNA damage response (By similarity).</text>
</comment>
<comment type="catalytic activity">
    <reaction evidence="2">
        <text>D-ribose + ATP = D-ribose 5-phosphate + ADP + H(+)</text>
        <dbReference type="Rhea" id="RHEA:13697"/>
        <dbReference type="ChEBI" id="CHEBI:15378"/>
        <dbReference type="ChEBI" id="CHEBI:30616"/>
        <dbReference type="ChEBI" id="CHEBI:47013"/>
        <dbReference type="ChEBI" id="CHEBI:78346"/>
        <dbReference type="ChEBI" id="CHEBI:456216"/>
        <dbReference type="EC" id="2.7.1.15"/>
    </reaction>
</comment>
<comment type="catalytic activity">
    <reaction evidence="2">
        <text>2-deoxy-D-ribose + ATP = 2-deoxy-D-ribose 5-phosphate + ADP + H(+)</text>
        <dbReference type="Rhea" id="RHEA:30871"/>
        <dbReference type="ChEBI" id="CHEBI:15378"/>
        <dbReference type="ChEBI" id="CHEBI:30616"/>
        <dbReference type="ChEBI" id="CHEBI:62877"/>
        <dbReference type="ChEBI" id="CHEBI:90761"/>
        <dbReference type="ChEBI" id="CHEBI:456216"/>
        <dbReference type="EC" id="2.7.1.229"/>
    </reaction>
</comment>
<comment type="subunit">
    <text evidence="1 2">Monomer in solution. Interacts with DnaA (via domains I (1-82) and III (111-326)). Interacts with DnaB (By similarity). Interacts with FtsZ; the interaction is direct and ensures correct localization during the cell cycle (By similarity).</text>
</comment>
<comment type="subcellular location">
    <subcellularLocation>
        <location evidence="3">Cytoplasm</location>
    </subcellularLocation>
    <text evidence="1 3">Localizes at mid-cell, forming a patchy ring (PubMed:34373624). Disassembles from the old septum to assemble at the newly formed division site. Colocalizes with FtsZ during the full cell cycle. Colocalizes with DnaA in newborn cells (By similarity).</text>
</comment>
<comment type="similarity">
    <text evidence="5">Belongs to the aminoglycoside phosphotransferase family.</text>
</comment>
<reference evidence="6 7" key="1">
    <citation type="journal article" date="2001" name="J. Bacteriol.">
        <title>Genome of the bacterium Streptococcus pneumoniae strain R6.</title>
        <authorList>
            <person name="Hoskins J."/>
            <person name="Alborn W.E. Jr."/>
            <person name="Arnold J."/>
            <person name="Blaszczak L.C."/>
            <person name="Burgett S."/>
            <person name="DeHoff B.S."/>
            <person name="Estrem S.T."/>
            <person name="Fritz L."/>
            <person name="Fu D.-J."/>
            <person name="Fuller W."/>
            <person name="Geringer C."/>
            <person name="Gilmour R."/>
            <person name="Glass J.S."/>
            <person name="Khoja H."/>
            <person name="Kraft A.R."/>
            <person name="Lagace R.E."/>
            <person name="LeBlanc D.J."/>
            <person name="Lee L.N."/>
            <person name="Lefkowitz E.J."/>
            <person name="Lu J."/>
            <person name="Matsushima P."/>
            <person name="McAhren S.M."/>
            <person name="McHenney M."/>
            <person name="McLeaster K."/>
            <person name="Mundy C.W."/>
            <person name="Nicas T.I."/>
            <person name="Norris F.H."/>
            <person name="O'Gara M."/>
            <person name="Peery R.B."/>
            <person name="Robertson G.T."/>
            <person name="Rockey P."/>
            <person name="Sun P.-M."/>
            <person name="Winkler M.E."/>
            <person name="Yang Y."/>
            <person name="Young-Bellido M."/>
            <person name="Zhao G."/>
            <person name="Zook C.A."/>
            <person name="Baltz R.H."/>
            <person name="Jaskunas S.R."/>
            <person name="Rosteck P.R. Jr."/>
            <person name="Skatrud P.L."/>
            <person name="Glass J.I."/>
        </authorList>
    </citation>
    <scope>NUCLEOTIDE SEQUENCE [LARGE SCALE GENOMIC DNA]</scope>
    <source>
        <strain evidence="7">ATCC BAA-255 / R6</strain>
    </source>
</reference>
<reference key="2">
    <citation type="journal article" date="2021" name="Nat. Microbiol.">
        <title>CcrZ is a pneumococcal spatiotemporal cell cycle regulator that interacts with FtsZ and controls DNA replication by modulating the activity of DnaA.</title>
        <authorList>
            <person name="Gallay C."/>
            <person name="Sanselicio S."/>
            <person name="Anderson M.E."/>
            <person name="Soh Y.M."/>
            <person name="Liu X."/>
            <person name="Stamsaas G.A."/>
            <person name="Pelliciari S."/>
            <person name="van Raaphorst R."/>
            <person name="Denereaz J."/>
            <person name="Kjos M."/>
            <person name="Murray H."/>
            <person name="Gruber S."/>
            <person name="Grossman A.D."/>
            <person name="Veening J.W."/>
        </authorList>
    </citation>
    <scope>SUBCELLULAR LOCATION</scope>
    <source>
        <strain evidence="4">ATCC BAA-255 / R6</strain>
    </source>
</reference>
<dbReference type="EC" id="2.7.1.15" evidence="2"/>
<dbReference type="EC" id="2.7.1.229" evidence="2"/>
<dbReference type="EMBL" id="AE007317">
    <property type="protein sequence ID" value="AAK99279.1"/>
    <property type="molecule type" value="Genomic_DNA"/>
</dbReference>
<dbReference type="PIR" id="C97931">
    <property type="entry name" value="C97931"/>
</dbReference>
<dbReference type="RefSeq" id="NP_358069.1">
    <property type="nucleotide sequence ID" value="NC_003098.1"/>
</dbReference>
<dbReference type="RefSeq" id="WP_000363002.1">
    <property type="nucleotide sequence ID" value="NC_003098.1"/>
</dbReference>
<dbReference type="SMR" id="Q8DQV8"/>
<dbReference type="STRING" id="171101.spr0475"/>
<dbReference type="GeneID" id="45654032"/>
<dbReference type="KEGG" id="spr:spr0475"/>
<dbReference type="PATRIC" id="fig|171101.6.peg.522"/>
<dbReference type="eggNOG" id="COG0510">
    <property type="taxonomic scope" value="Bacteria"/>
</dbReference>
<dbReference type="HOGENOM" id="CLU_093117_0_0_9"/>
<dbReference type="Proteomes" id="UP000000586">
    <property type="component" value="Chromosome"/>
</dbReference>
<dbReference type="GO" id="GO:0005737">
    <property type="term" value="C:cytoplasm"/>
    <property type="evidence" value="ECO:0000314"/>
    <property type="project" value="UniProtKB"/>
</dbReference>
<dbReference type="GO" id="GO:0005524">
    <property type="term" value="F:ATP binding"/>
    <property type="evidence" value="ECO:0000250"/>
    <property type="project" value="UniProtKB"/>
</dbReference>
<dbReference type="GO" id="GO:0019200">
    <property type="term" value="F:carbohydrate kinase activity"/>
    <property type="evidence" value="ECO:0000250"/>
    <property type="project" value="UniProtKB"/>
</dbReference>
<dbReference type="GO" id="GO:0016773">
    <property type="term" value="F:phosphotransferase activity, alcohol group as acceptor"/>
    <property type="evidence" value="ECO:0000250"/>
    <property type="project" value="UniProtKB"/>
</dbReference>
<dbReference type="GO" id="GO:0004747">
    <property type="term" value="F:ribokinase activity"/>
    <property type="evidence" value="ECO:0000250"/>
    <property type="project" value="UniProtKB"/>
</dbReference>
<dbReference type="GO" id="GO:0051301">
    <property type="term" value="P:cell division"/>
    <property type="evidence" value="ECO:0007669"/>
    <property type="project" value="UniProtKB-KW"/>
</dbReference>
<dbReference type="GO" id="GO:0006974">
    <property type="term" value="P:DNA damage response"/>
    <property type="evidence" value="ECO:0000250"/>
    <property type="project" value="UniProtKB"/>
</dbReference>
<dbReference type="GO" id="GO:0006270">
    <property type="term" value="P:DNA replication initiation"/>
    <property type="evidence" value="ECO:0000250"/>
    <property type="project" value="UniProtKB"/>
</dbReference>
<dbReference type="Gene3D" id="3.90.1200.10">
    <property type="match status" value="1"/>
</dbReference>
<dbReference type="InterPro" id="IPR002575">
    <property type="entry name" value="Aminoglycoside_PTrfase"/>
</dbReference>
<dbReference type="InterPro" id="IPR052077">
    <property type="entry name" value="CcrZ_PhaseVar_Mediator"/>
</dbReference>
<dbReference type="InterPro" id="IPR011009">
    <property type="entry name" value="Kinase-like_dom_sf"/>
</dbReference>
<dbReference type="NCBIfam" id="NF046102">
    <property type="entry name" value="CellCycRegCcrZ"/>
    <property type="match status" value="1"/>
</dbReference>
<dbReference type="PANTHER" id="PTHR40086:SF1">
    <property type="entry name" value="CELL CYCLE REGULATOR CCRZ"/>
    <property type="match status" value="1"/>
</dbReference>
<dbReference type="PANTHER" id="PTHR40086">
    <property type="entry name" value="PHOSPHOTRANSFERASE YTMP-RELATED"/>
    <property type="match status" value="1"/>
</dbReference>
<dbReference type="Pfam" id="PF01636">
    <property type="entry name" value="APH"/>
    <property type="match status" value="1"/>
</dbReference>
<dbReference type="SUPFAM" id="SSF56112">
    <property type="entry name" value="Protein kinase-like (PK-like)"/>
    <property type="match status" value="1"/>
</dbReference>
<name>CCRZ_STRR6</name>
<protein>
    <recommendedName>
        <fullName evidence="5">Cell cycle regulator CcrZ</fullName>
        <ecNumber evidence="2">2.7.1.15</ecNumber>
        <ecNumber evidence="2">2.7.1.229</ecNumber>
    </recommendedName>
    <alternativeName>
        <fullName evidence="5">Cell cycle regulator protein interacting with FtsZ</fullName>
    </alternativeName>
</protein>
<proteinExistence type="inferred from homology"/>
<keyword id="KW-0067">ATP-binding</keyword>
<keyword id="KW-0131">Cell cycle</keyword>
<keyword id="KW-0132">Cell division</keyword>
<keyword id="KW-0963">Cytoplasm</keyword>
<keyword id="KW-0227">DNA damage</keyword>
<keyword id="KW-0235">DNA replication</keyword>
<keyword id="KW-0418">Kinase</keyword>
<keyword id="KW-0547">Nucleotide-binding</keyword>
<keyword id="KW-1185">Reference proteome</keyword>
<keyword id="KW-0808">Transferase</keyword>
<gene>
    <name evidence="5" type="primary">ccrZ</name>
    <name evidence="6" type="ordered locus">spr0475</name>
</gene>
<accession>Q8DQV8</accession>
<feature type="chain" id="PRO_0000456808" description="Cell cycle regulator CcrZ">
    <location>
        <begin position="1"/>
        <end position="264"/>
    </location>
</feature>
<feature type="short sequence motif" description="Brenner's motif [HXDhX3N]" evidence="1">
    <location>
        <begin position="157"/>
        <end position="164"/>
    </location>
</feature>
<feature type="short sequence motif" description="APH" evidence="1">
    <location>
        <begin position="173"/>
        <end position="196"/>
    </location>
</feature>
<feature type="active site" description="Proton acceptor" evidence="2">
    <location>
        <position position="159"/>
    </location>
</feature>
<feature type="binding site" evidence="2">
    <location>
        <position position="32"/>
    </location>
    <ligand>
        <name>ATP</name>
        <dbReference type="ChEBI" id="CHEBI:30616"/>
    </ligand>
</feature>
<feature type="binding site" evidence="2">
    <location>
        <position position="70"/>
    </location>
    <ligand>
        <name>ATP</name>
        <dbReference type="ChEBI" id="CHEBI:30616"/>
    </ligand>
</feature>
<feature type="binding site" evidence="2">
    <location>
        <position position="73"/>
    </location>
    <ligand>
        <name>ATP</name>
        <dbReference type="ChEBI" id="CHEBI:30616"/>
    </ligand>
</feature>
<organism evidence="6 7">
    <name type="scientific">Streptococcus pneumoniae (strain ATCC BAA-255 / R6)</name>
    <dbReference type="NCBI Taxonomy" id="171101"/>
    <lineage>
        <taxon>Bacteria</taxon>
        <taxon>Bacillati</taxon>
        <taxon>Bacillota</taxon>
        <taxon>Bacilli</taxon>
        <taxon>Lactobacillales</taxon>
        <taxon>Streptococcaceae</taxon>
        <taxon>Streptococcus</taxon>
    </lineage>
</organism>
<sequence>MDLGDNELTLTPIPGKSGKAYMGSYPDGKRIFVKMNTSPILPGLAREQIAPQLLWSRRLADGRDMCAQEWLTGKILTPYDMNRKQIVNILTRLHRSRPLMTQLSRLGYAMETPVDLLQSWQETAPDALRKNHFISEVMADLRQTIPGFREDHATIVHGDVRHSNWIETDSGLIYLVDWDSVRLTDRMFDVAHMLCHYISEHQWKEWLTYYGYKYNQTVLSKLYWYGQLSYLSQISKYYMNQDLENVNREIHGLRHFRDKYGKRR</sequence>